<gene>
    <name evidence="1" type="primary">arnC</name>
    <name type="ordered locus">YpAngola_A2611</name>
</gene>
<dbReference type="EC" id="2.4.2.53" evidence="1"/>
<dbReference type="EMBL" id="CP000901">
    <property type="protein sequence ID" value="ABX85876.1"/>
    <property type="molecule type" value="Genomic_DNA"/>
</dbReference>
<dbReference type="RefSeq" id="WP_002211824.1">
    <property type="nucleotide sequence ID" value="NZ_CP009935.1"/>
</dbReference>
<dbReference type="SMR" id="A9R094"/>
<dbReference type="CAZy" id="GT2">
    <property type="family name" value="Glycosyltransferase Family 2"/>
</dbReference>
<dbReference type="GeneID" id="57976256"/>
<dbReference type="KEGG" id="ypg:YpAngola_A2611"/>
<dbReference type="PATRIC" id="fig|349746.12.peg.3638"/>
<dbReference type="UniPathway" id="UPA00030"/>
<dbReference type="UniPathway" id="UPA00036">
    <property type="reaction ID" value="UER00495"/>
</dbReference>
<dbReference type="GO" id="GO:0005886">
    <property type="term" value="C:plasma membrane"/>
    <property type="evidence" value="ECO:0007669"/>
    <property type="project" value="UniProtKB-SubCell"/>
</dbReference>
<dbReference type="GO" id="GO:0016780">
    <property type="term" value="F:phosphotransferase activity, for other substituted phosphate groups"/>
    <property type="evidence" value="ECO:0007669"/>
    <property type="project" value="UniProtKB-UniRule"/>
</dbReference>
<dbReference type="GO" id="GO:0099621">
    <property type="term" value="F:undecaprenyl-phosphate 4-deoxy-4-formamido-L-arabinose transferase activity"/>
    <property type="evidence" value="ECO:0007669"/>
    <property type="project" value="UniProtKB-EC"/>
</dbReference>
<dbReference type="GO" id="GO:0036108">
    <property type="term" value="P:4-amino-4-deoxy-alpha-L-arabinopyranosyl undecaprenyl phosphate biosynthetic process"/>
    <property type="evidence" value="ECO:0007669"/>
    <property type="project" value="UniProtKB-UniRule"/>
</dbReference>
<dbReference type="GO" id="GO:0009245">
    <property type="term" value="P:lipid A biosynthetic process"/>
    <property type="evidence" value="ECO:0007669"/>
    <property type="project" value="UniProtKB-UniRule"/>
</dbReference>
<dbReference type="GO" id="GO:0009103">
    <property type="term" value="P:lipopolysaccharide biosynthetic process"/>
    <property type="evidence" value="ECO:0007669"/>
    <property type="project" value="UniProtKB-UniRule"/>
</dbReference>
<dbReference type="GO" id="GO:0046677">
    <property type="term" value="P:response to antibiotic"/>
    <property type="evidence" value="ECO:0007669"/>
    <property type="project" value="UniProtKB-KW"/>
</dbReference>
<dbReference type="CDD" id="cd04187">
    <property type="entry name" value="DPM1_like_bac"/>
    <property type="match status" value="1"/>
</dbReference>
<dbReference type="FunFam" id="3.90.550.10:FF:000019">
    <property type="entry name" value="Undecaprenyl-phosphate 4-deoxy-4-formamido-L-arabinose transferase"/>
    <property type="match status" value="1"/>
</dbReference>
<dbReference type="Gene3D" id="3.90.550.10">
    <property type="entry name" value="Spore Coat Polysaccharide Biosynthesis Protein SpsA, Chain A"/>
    <property type="match status" value="1"/>
</dbReference>
<dbReference type="HAMAP" id="MF_01164">
    <property type="entry name" value="ArnC_transfer"/>
    <property type="match status" value="1"/>
</dbReference>
<dbReference type="InterPro" id="IPR022857">
    <property type="entry name" value="ArnC_tfrase"/>
</dbReference>
<dbReference type="InterPro" id="IPR001173">
    <property type="entry name" value="Glyco_trans_2-like"/>
</dbReference>
<dbReference type="InterPro" id="IPR050256">
    <property type="entry name" value="Glycosyltransferase_2"/>
</dbReference>
<dbReference type="InterPro" id="IPR029044">
    <property type="entry name" value="Nucleotide-diphossugar_trans"/>
</dbReference>
<dbReference type="NCBIfam" id="NF007986">
    <property type="entry name" value="PRK10714.1"/>
    <property type="match status" value="1"/>
</dbReference>
<dbReference type="PANTHER" id="PTHR48090:SF3">
    <property type="entry name" value="UNDECAPRENYL-PHOSPHATE 4-DEOXY-4-FORMAMIDO-L-ARABINOSE TRANSFERASE"/>
    <property type="match status" value="1"/>
</dbReference>
<dbReference type="PANTHER" id="PTHR48090">
    <property type="entry name" value="UNDECAPRENYL-PHOSPHATE 4-DEOXY-4-FORMAMIDO-L-ARABINOSE TRANSFERASE-RELATED"/>
    <property type="match status" value="1"/>
</dbReference>
<dbReference type="Pfam" id="PF00535">
    <property type="entry name" value="Glycos_transf_2"/>
    <property type="match status" value="1"/>
</dbReference>
<dbReference type="SUPFAM" id="SSF53448">
    <property type="entry name" value="Nucleotide-diphospho-sugar transferases"/>
    <property type="match status" value="1"/>
</dbReference>
<reference key="1">
    <citation type="journal article" date="2010" name="J. Bacteriol.">
        <title>Genome sequence of the deep-rooted Yersinia pestis strain Angola reveals new insights into the evolution and pangenome of the plague bacterium.</title>
        <authorList>
            <person name="Eppinger M."/>
            <person name="Worsham P.L."/>
            <person name="Nikolich M.P."/>
            <person name="Riley D.R."/>
            <person name="Sebastian Y."/>
            <person name="Mou S."/>
            <person name="Achtman M."/>
            <person name="Lindler L.E."/>
            <person name="Ravel J."/>
        </authorList>
    </citation>
    <scope>NUCLEOTIDE SEQUENCE [LARGE SCALE GENOMIC DNA]</scope>
    <source>
        <strain>Angola</strain>
    </source>
</reference>
<feature type="chain" id="PRO_1000137926" description="Undecaprenyl-phosphate 4-deoxy-4-formamido-L-arabinose transferase">
    <location>
        <begin position="1"/>
        <end position="327"/>
    </location>
</feature>
<feature type="transmembrane region" description="Helical" evidence="1">
    <location>
        <begin position="235"/>
        <end position="255"/>
    </location>
</feature>
<feature type="transmembrane region" description="Helical" evidence="1">
    <location>
        <begin position="270"/>
        <end position="290"/>
    </location>
</feature>
<protein>
    <recommendedName>
        <fullName evidence="1">Undecaprenyl-phosphate 4-deoxy-4-formamido-L-arabinose transferase</fullName>
        <ecNumber evidence="1">2.4.2.53</ecNumber>
    </recommendedName>
    <alternativeName>
        <fullName evidence="1">Undecaprenyl-phosphate Ara4FN transferase</fullName>
        <shortName evidence="1">Ara4FN transferase</shortName>
    </alternativeName>
</protein>
<accession>A9R094</accession>
<keyword id="KW-0046">Antibiotic resistance</keyword>
<keyword id="KW-0997">Cell inner membrane</keyword>
<keyword id="KW-1003">Cell membrane</keyword>
<keyword id="KW-0328">Glycosyltransferase</keyword>
<keyword id="KW-0441">Lipid A biosynthesis</keyword>
<keyword id="KW-0444">Lipid biosynthesis</keyword>
<keyword id="KW-0443">Lipid metabolism</keyword>
<keyword id="KW-0448">Lipopolysaccharide biosynthesis</keyword>
<keyword id="KW-0472">Membrane</keyword>
<keyword id="KW-0808">Transferase</keyword>
<keyword id="KW-0812">Transmembrane</keyword>
<keyword id="KW-1133">Transmembrane helix</keyword>
<proteinExistence type="inferred from homology"/>
<evidence type="ECO:0000255" key="1">
    <source>
        <dbReference type="HAMAP-Rule" id="MF_01164"/>
    </source>
</evidence>
<sequence length="327" mass="36421">MSLNEPIKKVSIVIPVYNEQESLPALIDRTTAACKLLTQAYEIILVDDGSSDNSTELLTAAANDPDSHIIAILLNRNYGQHSAIMAGFNQVSGDLIITLDADLQNPPEETPRLVHVAEEGYDVVGTVRANRQDSLFRKTASRMINMMIQRATGKSMGDYGCMLRAYRRHIVEAMLHCHERSTFIPILANTFARRTTEITVHHAEREFGNSKYSLMRLINLMYDLITCLTTTPLRLLSLVGSAIALLGFTFSVLLVALRLIFGPEWAGGGVFTLFAVLFMFIGAQFVGMGLLGEYIGRIYNDVRARPRYFVQKVVGAEQTENNQDVEK</sequence>
<name>ARNC_YERPG</name>
<comment type="function">
    <text evidence="1">Catalyzes the transfer of 4-deoxy-4-formamido-L-arabinose from UDP to undecaprenyl phosphate. The modified arabinose is attached to lipid A and is required for resistance to polymyxin and cationic antimicrobial peptides.</text>
</comment>
<comment type="catalytic activity">
    <reaction evidence="1">
        <text>UDP-4-deoxy-4-formamido-beta-L-arabinose + di-trans,octa-cis-undecaprenyl phosphate = 4-deoxy-4-formamido-alpha-L-arabinopyranosyl di-trans,octa-cis-undecaprenyl phosphate + UDP</text>
        <dbReference type="Rhea" id="RHEA:27722"/>
        <dbReference type="ChEBI" id="CHEBI:58223"/>
        <dbReference type="ChEBI" id="CHEBI:58709"/>
        <dbReference type="ChEBI" id="CHEBI:58909"/>
        <dbReference type="ChEBI" id="CHEBI:60392"/>
        <dbReference type="EC" id="2.4.2.53"/>
    </reaction>
</comment>
<comment type="pathway">
    <text evidence="1">Glycolipid biosynthesis; 4-amino-4-deoxy-alpha-L-arabinose undecaprenyl phosphate biosynthesis; 4-amino-4-deoxy-alpha-L-arabinose undecaprenyl phosphate from UDP-4-deoxy-4-formamido-beta-L-arabinose and undecaprenyl phosphate: step 1/2.</text>
</comment>
<comment type="pathway">
    <text evidence="1">Bacterial outer membrane biogenesis; lipopolysaccharide biosynthesis.</text>
</comment>
<comment type="subcellular location">
    <subcellularLocation>
        <location evidence="1">Cell inner membrane</location>
        <topology evidence="1">Multi-pass membrane protein</topology>
    </subcellularLocation>
</comment>
<comment type="similarity">
    <text evidence="1">Belongs to the glycosyltransferase 2 family.</text>
</comment>
<organism>
    <name type="scientific">Yersinia pestis bv. Antiqua (strain Angola)</name>
    <dbReference type="NCBI Taxonomy" id="349746"/>
    <lineage>
        <taxon>Bacteria</taxon>
        <taxon>Pseudomonadati</taxon>
        <taxon>Pseudomonadota</taxon>
        <taxon>Gammaproteobacteria</taxon>
        <taxon>Enterobacterales</taxon>
        <taxon>Yersiniaceae</taxon>
        <taxon>Yersinia</taxon>
    </lineage>
</organism>